<reference key="1">
    <citation type="journal article" date="2002" name="Proc. Natl. Acad. Sci. U.S.A.">
        <title>The Brucella suis genome reveals fundamental similarities between animal and plant pathogens and symbionts.</title>
        <authorList>
            <person name="Paulsen I.T."/>
            <person name="Seshadri R."/>
            <person name="Nelson K.E."/>
            <person name="Eisen J.A."/>
            <person name="Heidelberg J.F."/>
            <person name="Read T.D."/>
            <person name="Dodson R.J."/>
            <person name="Umayam L.A."/>
            <person name="Brinkac L.M."/>
            <person name="Beanan M.J."/>
            <person name="Daugherty S.C."/>
            <person name="DeBoy R.T."/>
            <person name="Durkin A.S."/>
            <person name="Kolonay J.F."/>
            <person name="Madupu R."/>
            <person name="Nelson W.C."/>
            <person name="Ayodeji B."/>
            <person name="Kraul M."/>
            <person name="Shetty J."/>
            <person name="Malek J.A."/>
            <person name="Van Aken S.E."/>
            <person name="Riedmuller S."/>
            <person name="Tettelin H."/>
            <person name="Gill S.R."/>
            <person name="White O."/>
            <person name="Salzberg S.L."/>
            <person name="Hoover D.L."/>
            <person name="Lindler L.E."/>
            <person name="Halling S.M."/>
            <person name="Boyle S.M."/>
            <person name="Fraser C.M."/>
        </authorList>
    </citation>
    <scope>NUCLEOTIDE SEQUENCE [LARGE SCALE GENOMIC DNA]</scope>
    <source>
        <strain>1330</strain>
    </source>
</reference>
<reference key="2">
    <citation type="journal article" date="2011" name="J. Bacteriol.">
        <title>Revised genome sequence of Brucella suis 1330.</title>
        <authorList>
            <person name="Tae H."/>
            <person name="Shallom S."/>
            <person name="Settlage R."/>
            <person name="Preston D."/>
            <person name="Adams L.G."/>
            <person name="Garner H.R."/>
        </authorList>
    </citation>
    <scope>NUCLEOTIDE SEQUENCE [LARGE SCALE GENOMIC DNA]</scope>
    <source>
        <strain>1330</strain>
    </source>
</reference>
<keyword id="KW-0067">ATP-binding</keyword>
<keyword id="KW-0997">Cell inner membrane</keyword>
<keyword id="KW-1003">Cell membrane</keyword>
<keyword id="KW-0472">Membrane</keyword>
<keyword id="KW-0547">Nucleotide-binding</keyword>
<keyword id="KW-0762">Sugar transport</keyword>
<keyword id="KW-1278">Translocase</keyword>
<keyword id="KW-0812">Transmembrane</keyword>
<keyword id="KW-1133">Transmembrane helix</keyword>
<keyword id="KW-0813">Transport</keyword>
<accession>Q8G0T8</accession>
<accession>G0K9S2</accession>
<gene>
    <name evidence="2" type="primary">ndvA</name>
    <name type="ordered locus">BR0998</name>
    <name type="ordered locus">BS1330_I0994</name>
</gene>
<organism>
    <name type="scientific">Brucella suis biovar 1 (strain 1330)</name>
    <dbReference type="NCBI Taxonomy" id="204722"/>
    <lineage>
        <taxon>Bacteria</taxon>
        <taxon>Pseudomonadati</taxon>
        <taxon>Pseudomonadota</taxon>
        <taxon>Alphaproteobacteria</taxon>
        <taxon>Hyphomicrobiales</taxon>
        <taxon>Brucellaceae</taxon>
        <taxon>Brucella/Ochrobactrum group</taxon>
        <taxon>Brucella</taxon>
    </lineage>
</organism>
<feature type="chain" id="PRO_0000290247" description="Beta-(1--&gt;2)glucan export ATP-binding/permease protein NdvA">
    <location>
        <begin position="1"/>
        <end position="599"/>
    </location>
</feature>
<feature type="transmembrane region" description="Helical" evidence="2">
    <location>
        <begin position="22"/>
        <end position="42"/>
    </location>
</feature>
<feature type="transmembrane region" description="Helical" evidence="2">
    <location>
        <begin position="55"/>
        <end position="75"/>
    </location>
</feature>
<feature type="transmembrane region" description="Helical" evidence="2">
    <location>
        <begin position="156"/>
        <end position="176"/>
    </location>
</feature>
<feature type="transmembrane region" description="Helical" evidence="2">
    <location>
        <begin position="248"/>
        <end position="268"/>
    </location>
</feature>
<feature type="transmembrane region" description="Helical" evidence="2">
    <location>
        <begin position="276"/>
        <end position="296"/>
    </location>
</feature>
<feature type="domain" description="ABC transmembrane type-1" evidence="2">
    <location>
        <begin position="21"/>
        <end position="301"/>
    </location>
</feature>
<feature type="domain" description="ABC transporter" evidence="2">
    <location>
        <begin position="335"/>
        <end position="569"/>
    </location>
</feature>
<feature type="binding site" evidence="2">
    <location>
        <begin position="368"/>
        <end position="375"/>
    </location>
    <ligand>
        <name>ATP</name>
        <dbReference type="ChEBI" id="CHEBI:30616"/>
    </ligand>
</feature>
<protein>
    <recommendedName>
        <fullName evidence="2">Beta-(1--&gt;2)glucan export ATP-binding/permease protein NdvA</fullName>
        <ecNumber evidence="2">7.5.2.3</ecNumber>
    </recommendedName>
</protein>
<comment type="function">
    <text evidence="1">Involved in beta-(1--&gt;2)glucan export. Transmembrane domains (TMD) form a pore in the inner membrane and the ATP-binding domain (NBD) is responsible for energy generation (By similarity).</text>
</comment>
<comment type="catalytic activity">
    <reaction evidence="2">
        <text>[(1-&gt;2)-beta-D-glucosyl](n)(in) + ATP + H2O = [(1-&gt;2)-beta-D-glucosyl](n)(out) + ADP + phosphate + H(+)</text>
        <dbReference type="Rhea" id="RHEA:18453"/>
        <dbReference type="Rhea" id="RHEA-COMP:11881"/>
        <dbReference type="ChEBI" id="CHEBI:15377"/>
        <dbReference type="ChEBI" id="CHEBI:15378"/>
        <dbReference type="ChEBI" id="CHEBI:27517"/>
        <dbReference type="ChEBI" id="CHEBI:30616"/>
        <dbReference type="ChEBI" id="CHEBI:43474"/>
        <dbReference type="ChEBI" id="CHEBI:456216"/>
        <dbReference type="EC" id="7.5.2.3"/>
    </reaction>
</comment>
<comment type="subunit">
    <text evidence="2">Homodimer.</text>
</comment>
<comment type="subcellular location">
    <subcellularLocation>
        <location evidence="2">Cell inner membrane</location>
        <topology evidence="2">Multi-pass membrane protein</topology>
    </subcellularLocation>
</comment>
<comment type="domain">
    <text>In NdvA the ATP-binding domain (NBD) and the transmembrane domain (TMD) are fused.</text>
</comment>
<comment type="similarity">
    <text evidence="2">Belongs to the ABC transporter superfamily. Beta-(1--&gt;2)glucan exporter (TC 3.A.1.108.1) family.</text>
</comment>
<evidence type="ECO:0000250" key="1"/>
<evidence type="ECO:0000255" key="2">
    <source>
        <dbReference type="HAMAP-Rule" id="MF_01728"/>
    </source>
</evidence>
<dbReference type="EC" id="7.5.2.3" evidence="2"/>
<dbReference type="EMBL" id="AE014291">
    <property type="protein sequence ID" value="AAN29921.1"/>
    <property type="molecule type" value="Genomic_DNA"/>
</dbReference>
<dbReference type="EMBL" id="CP002997">
    <property type="protein sequence ID" value="AEM18338.1"/>
    <property type="molecule type" value="Genomic_DNA"/>
</dbReference>
<dbReference type="SMR" id="Q8G0T8"/>
<dbReference type="KEGG" id="bms:BR0998"/>
<dbReference type="KEGG" id="bsi:BS1330_I0994"/>
<dbReference type="PATRIC" id="fig|204722.21.peg.735"/>
<dbReference type="HOGENOM" id="CLU_000604_84_3_5"/>
<dbReference type="Proteomes" id="UP000007104">
    <property type="component" value="Chromosome I"/>
</dbReference>
<dbReference type="GO" id="GO:0005886">
    <property type="term" value="C:plasma membrane"/>
    <property type="evidence" value="ECO:0007669"/>
    <property type="project" value="UniProtKB-SubCell"/>
</dbReference>
<dbReference type="GO" id="GO:0015441">
    <property type="term" value="F:ABC-type beta-glucan transporter activity"/>
    <property type="evidence" value="ECO:0007669"/>
    <property type="project" value="UniProtKB-EC"/>
</dbReference>
<dbReference type="GO" id="GO:0005524">
    <property type="term" value="F:ATP binding"/>
    <property type="evidence" value="ECO:0007669"/>
    <property type="project" value="UniProtKB-KW"/>
</dbReference>
<dbReference type="GO" id="GO:0016887">
    <property type="term" value="F:ATP hydrolysis activity"/>
    <property type="evidence" value="ECO:0007669"/>
    <property type="project" value="InterPro"/>
</dbReference>
<dbReference type="GO" id="GO:0034040">
    <property type="term" value="F:ATPase-coupled lipid transmembrane transporter activity"/>
    <property type="evidence" value="ECO:0007669"/>
    <property type="project" value="TreeGrafter"/>
</dbReference>
<dbReference type="CDD" id="cd18562">
    <property type="entry name" value="ABC_6TM_NdvA_beta-glucan_exporter_like"/>
    <property type="match status" value="1"/>
</dbReference>
<dbReference type="FunFam" id="1.20.1560.10:FF:000182">
    <property type="entry name" value="Beta-(1--&gt;2)glucan export ATP-binding/permease protein NdvA"/>
    <property type="match status" value="1"/>
</dbReference>
<dbReference type="FunFam" id="3.40.50.300:FF:000221">
    <property type="entry name" value="Multidrug ABC transporter ATP-binding protein"/>
    <property type="match status" value="1"/>
</dbReference>
<dbReference type="Gene3D" id="1.20.1560.10">
    <property type="entry name" value="ABC transporter type 1, transmembrane domain"/>
    <property type="match status" value="1"/>
</dbReference>
<dbReference type="Gene3D" id="3.40.50.300">
    <property type="entry name" value="P-loop containing nucleotide triphosphate hydrolases"/>
    <property type="match status" value="1"/>
</dbReference>
<dbReference type="InterPro" id="IPR003593">
    <property type="entry name" value="AAA+_ATPase"/>
</dbReference>
<dbReference type="InterPro" id="IPR011527">
    <property type="entry name" value="ABC1_TM_dom"/>
</dbReference>
<dbReference type="InterPro" id="IPR036640">
    <property type="entry name" value="ABC1_TM_sf"/>
</dbReference>
<dbReference type="InterPro" id="IPR003439">
    <property type="entry name" value="ABC_transporter-like_ATP-bd"/>
</dbReference>
<dbReference type="InterPro" id="IPR017871">
    <property type="entry name" value="ABC_transporter-like_CS"/>
</dbReference>
<dbReference type="InterPro" id="IPR005896">
    <property type="entry name" value="NdvA"/>
</dbReference>
<dbReference type="InterPro" id="IPR027417">
    <property type="entry name" value="P-loop_NTPase"/>
</dbReference>
<dbReference type="InterPro" id="IPR039421">
    <property type="entry name" value="Type_1_exporter"/>
</dbReference>
<dbReference type="NCBIfam" id="TIGR01192">
    <property type="entry name" value="chvA"/>
    <property type="match status" value="1"/>
</dbReference>
<dbReference type="NCBIfam" id="NF010178">
    <property type="entry name" value="PRK13657.1"/>
    <property type="match status" value="1"/>
</dbReference>
<dbReference type="PANTHER" id="PTHR24221">
    <property type="entry name" value="ATP-BINDING CASSETTE SUB-FAMILY B"/>
    <property type="match status" value="1"/>
</dbReference>
<dbReference type="PANTHER" id="PTHR24221:SF654">
    <property type="entry name" value="ATP-BINDING CASSETTE SUB-FAMILY B MEMBER 6"/>
    <property type="match status" value="1"/>
</dbReference>
<dbReference type="Pfam" id="PF00664">
    <property type="entry name" value="ABC_membrane"/>
    <property type="match status" value="1"/>
</dbReference>
<dbReference type="Pfam" id="PF00005">
    <property type="entry name" value="ABC_tran"/>
    <property type="match status" value="1"/>
</dbReference>
<dbReference type="SMART" id="SM00382">
    <property type="entry name" value="AAA"/>
    <property type="match status" value="1"/>
</dbReference>
<dbReference type="SUPFAM" id="SSF90123">
    <property type="entry name" value="ABC transporter transmembrane region"/>
    <property type="match status" value="1"/>
</dbReference>
<dbReference type="SUPFAM" id="SSF52540">
    <property type="entry name" value="P-loop containing nucleoside triphosphate hydrolases"/>
    <property type="match status" value="1"/>
</dbReference>
<dbReference type="PROSITE" id="PS50929">
    <property type="entry name" value="ABC_TM1F"/>
    <property type="match status" value="1"/>
</dbReference>
<dbReference type="PROSITE" id="PS00211">
    <property type="entry name" value="ABC_TRANSPORTER_1"/>
    <property type="match status" value="1"/>
</dbReference>
<dbReference type="PROSITE" id="PS50893">
    <property type="entry name" value="ABC_TRANSPORTER_2"/>
    <property type="match status" value="1"/>
</dbReference>
<dbReference type="PROSITE" id="PS51317">
    <property type="entry name" value="NDVA"/>
    <property type="match status" value="1"/>
</dbReference>
<sequence>MSLLKIYWRAMQYLAVERTATITMCVASVLVALVTLAEPVLFGRVIQSISDKGDIFSPLLMWAALGGFNIMAAVFVARGADRLAHRRRLGVMIDSYERLITMPLAWHQKRGTSNALHTLIRATDSLFTLWLEFMRQHLTTVVALATLIPVAMTMDMRMSLVLIVLGVIYVMIGQLVMRKTKDGQAAVEKHHHKLFEHVSDTISNVSVVQSYNRIASETQALRDYAKNLENAQFPVLNWWALASGLNRMASTFSMVVVLVLGAYFVTKGQMRVGDVIAFIGFAQLMIGRLDQISAFINQTVTARAKLEEFFQMEDATADRQEPENVADLNDVKGDIVFDNVTFEFPNSGQGIYDVSFEVKPGQTVAIVGPTGAGKTTLINLLQRVFDPAAGRIMIDGTDTRTVSRRSLRHAIATVFQDAGLFNRSVEDNIRVGRANATHEEVHAAAKAAAAHDFILAKSEGYDTFVGERGSQLSGGERQRLAIARAILKDSPILVLDEATSALDVETEEKVKQAVDELSHNRTTFIIAHRLSTVRSADLVLFMDKGHLVESGSFNELAERGGRFSDLLRAGGLKLEDKQPKQPVVEGSNVMPFPVKGAVA</sequence>
<name>NDVA_BRUSU</name>
<proteinExistence type="inferred from homology"/>